<comment type="catalytic activity">
    <reaction evidence="1">
        <text>L-glutamine + H2O = L-glutamate + NH4(+)</text>
        <dbReference type="Rhea" id="RHEA:15889"/>
        <dbReference type="ChEBI" id="CHEBI:15377"/>
        <dbReference type="ChEBI" id="CHEBI:28938"/>
        <dbReference type="ChEBI" id="CHEBI:29985"/>
        <dbReference type="ChEBI" id="CHEBI:58359"/>
        <dbReference type="EC" id="3.5.1.2"/>
    </reaction>
</comment>
<comment type="subunit">
    <text evidence="1">Homotetramer.</text>
</comment>
<comment type="similarity">
    <text evidence="1">Belongs to the glutaminase family.</text>
</comment>
<reference key="1">
    <citation type="submission" date="2006-01" db="EMBL/GenBank/DDBJ databases">
        <title>Complete sequence of Rhodopseudomonas palustris HaA2.</title>
        <authorList>
            <consortium name="US DOE Joint Genome Institute"/>
            <person name="Copeland A."/>
            <person name="Lucas S."/>
            <person name="Lapidus A."/>
            <person name="Barry K."/>
            <person name="Detter J.C."/>
            <person name="Glavina T."/>
            <person name="Hammon N."/>
            <person name="Israni S."/>
            <person name="Pitluck S."/>
            <person name="Chain P."/>
            <person name="Malfatti S."/>
            <person name="Shin M."/>
            <person name="Vergez L."/>
            <person name="Schmutz J."/>
            <person name="Larimer F."/>
            <person name="Land M."/>
            <person name="Hauser L."/>
            <person name="Pelletier D.A."/>
            <person name="Kyrpides N."/>
            <person name="Anderson I."/>
            <person name="Oda Y."/>
            <person name="Harwood C.S."/>
            <person name="Richardson P."/>
        </authorList>
    </citation>
    <scope>NUCLEOTIDE SEQUENCE [LARGE SCALE GENOMIC DNA]</scope>
    <source>
        <strain>HaA2</strain>
    </source>
</reference>
<feature type="chain" id="PRO_1000048349" description="Glutaminase">
    <location>
        <begin position="1"/>
        <end position="311"/>
    </location>
</feature>
<feature type="binding site" evidence="1">
    <location>
        <position position="66"/>
    </location>
    <ligand>
        <name>substrate</name>
    </ligand>
</feature>
<feature type="binding site" evidence="1">
    <location>
        <position position="116"/>
    </location>
    <ligand>
        <name>substrate</name>
    </ligand>
</feature>
<feature type="binding site" evidence="1">
    <location>
        <position position="162"/>
    </location>
    <ligand>
        <name>substrate</name>
    </ligand>
</feature>
<feature type="binding site" evidence="1">
    <location>
        <position position="169"/>
    </location>
    <ligand>
        <name>substrate</name>
    </ligand>
</feature>
<feature type="binding site" evidence="1">
    <location>
        <position position="193"/>
    </location>
    <ligand>
        <name>substrate</name>
    </ligand>
</feature>
<feature type="binding site" evidence="1">
    <location>
        <position position="245"/>
    </location>
    <ligand>
        <name>substrate</name>
    </ligand>
</feature>
<feature type="binding site" evidence="1">
    <location>
        <position position="263"/>
    </location>
    <ligand>
        <name>substrate</name>
    </ligand>
</feature>
<keyword id="KW-0378">Hydrolase</keyword>
<keyword id="KW-1185">Reference proteome</keyword>
<sequence length="311" mass="32999">MNPDLLDHTVAEIAAEMAQRPDRGAVASYIPELAGVDPQRFGLVVIDADGHVAAGGDADMPFSIQSISKVFTLTLALGLAGDRVWRRVGREPSGSAFNSIVQLERERGIPRNPFINAGAIAVTDLILSGHQPREALGEILRFMQFLAGDDSIVIDDAVAASEQRTGFRNAALANYMKSFGVLDNPVEYTLGVYFHHCAIAMSCRQLALAGRFLAHNGRNPSTGHNVVSTQRARRINALMLTCGHYDGSGEFAYRVGLPGKSGVGGGVLAVAPGKASIAVWSPGLDAAGNSHLGRIALEALTRRLGWSIFGV</sequence>
<gene>
    <name evidence="1" type="primary">glsA</name>
    <name type="ordered locus">RPB_1403</name>
</gene>
<protein>
    <recommendedName>
        <fullName evidence="1">Glutaminase</fullName>
        <ecNumber evidence="1">3.5.1.2</ecNumber>
    </recommendedName>
</protein>
<accession>Q2J097</accession>
<dbReference type="EC" id="3.5.1.2" evidence="1"/>
<dbReference type="EMBL" id="CP000250">
    <property type="protein sequence ID" value="ABD06113.1"/>
    <property type="molecule type" value="Genomic_DNA"/>
</dbReference>
<dbReference type="RefSeq" id="WP_011440301.1">
    <property type="nucleotide sequence ID" value="NC_007778.1"/>
</dbReference>
<dbReference type="SMR" id="Q2J097"/>
<dbReference type="STRING" id="316058.RPB_1403"/>
<dbReference type="KEGG" id="rpb:RPB_1403"/>
<dbReference type="eggNOG" id="COG2066">
    <property type="taxonomic scope" value="Bacteria"/>
</dbReference>
<dbReference type="HOGENOM" id="CLU_027932_1_1_5"/>
<dbReference type="OrthoDB" id="9788822at2"/>
<dbReference type="Proteomes" id="UP000008809">
    <property type="component" value="Chromosome"/>
</dbReference>
<dbReference type="GO" id="GO:0004359">
    <property type="term" value="F:glutaminase activity"/>
    <property type="evidence" value="ECO:0007669"/>
    <property type="project" value="UniProtKB-UniRule"/>
</dbReference>
<dbReference type="GO" id="GO:0006537">
    <property type="term" value="P:glutamate biosynthetic process"/>
    <property type="evidence" value="ECO:0007669"/>
    <property type="project" value="TreeGrafter"/>
</dbReference>
<dbReference type="GO" id="GO:0006543">
    <property type="term" value="P:glutamine catabolic process"/>
    <property type="evidence" value="ECO:0007669"/>
    <property type="project" value="TreeGrafter"/>
</dbReference>
<dbReference type="FunFam" id="3.40.710.10:FF:000005">
    <property type="entry name" value="Glutaminase"/>
    <property type="match status" value="1"/>
</dbReference>
<dbReference type="Gene3D" id="3.40.710.10">
    <property type="entry name" value="DD-peptidase/beta-lactamase superfamily"/>
    <property type="match status" value="1"/>
</dbReference>
<dbReference type="HAMAP" id="MF_00313">
    <property type="entry name" value="Glutaminase"/>
    <property type="match status" value="1"/>
</dbReference>
<dbReference type="InterPro" id="IPR012338">
    <property type="entry name" value="Beta-lactam/transpept-like"/>
</dbReference>
<dbReference type="InterPro" id="IPR015868">
    <property type="entry name" value="Glutaminase"/>
</dbReference>
<dbReference type="NCBIfam" id="TIGR03814">
    <property type="entry name" value="Gln_ase"/>
    <property type="match status" value="1"/>
</dbReference>
<dbReference type="NCBIfam" id="NF002133">
    <property type="entry name" value="PRK00971.1-2"/>
    <property type="match status" value="1"/>
</dbReference>
<dbReference type="PANTHER" id="PTHR12544">
    <property type="entry name" value="GLUTAMINASE"/>
    <property type="match status" value="1"/>
</dbReference>
<dbReference type="PANTHER" id="PTHR12544:SF29">
    <property type="entry name" value="GLUTAMINASE"/>
    <property type="match status" value="1"/>
</dbReference>
<dbReference type="Pfam" id="PF04960">
    <property type="entry name" value="Glutaminase"/>
    <property type="match status" value="1"/>
</dbReference>
<dbReference type="SUPFAM" id="SSF56601">
    <property type="entry name" value="beta-lactamase/transpeptidase-like"/>
    <property type="match status" value="1"/>
</dbReference>
<evidence type="ECO:0000255" key="1">
    <source>
        <dbReference type="HAMAP-Rule" id="MF_00313"/>
    </source>
</evidence>
<name>GLSA_RHOP2</name>
<organism>
    <name type="scientific">Rhodopseudomonas palustris (strain HaA2)</name>
    <dbReference type="NCBI Taxonomy" id="316058"/>
    <lineage>
        <taxon>Bacteria</taxon>
        <taxon>Pseudomonadati</taxon>
        <taxon>Pseudomonadota</taxon>
        <taxon>Alphaproteobacteria</taxon>
        <taxon>Hyphomicrobiales</taxon>
        <taxon>Nitrobacteraceae</taxon>
        <taxon>Rhodopseudomonas</taxon>
    </lineage>
</organism>
<proteinExistence type="inferred from homology"/>